<organism>
    <name type="scientific">Mus musculus</name>
    <name type="common">Mouse</name>
    <dbReference type="NCBI Taxonomy" id="10090"/>
    <lineage>
        <taxon>Eukaryota</taxon>
        <taxon>Metazoa</taxon>
        <taxon>Chordata</taxon>
        <taxon>Craniata</taxon>
        <taxon>Vertebrata</taxon>
        <taxon>Euteleostomi</taxon>
        <taxon>Mammalia</taxon>
        <taxon>Eutheria</taxon>
        <taxon>Euarchontoglires</taxon>
        <taxon>Glires</taxon>
        <taxon>Rodentia</taxon>
        <taxon>Myomorpha</taxon>
        <taxon>Muroidea</taxon>
        <taxon>Muridae</taxon>
        <taxon>Murinae</taxon>
        <taxon>Mus</taxon>
        <taxon>Mus</taxon>
    </lineage>
</organism>
<protein>
    <recommendedName>
        <fullName>Alpha-mannosidase 2x</fullName>
        <ecNumber evidence="2">3.2.1.114</ecNumber>
    </recommendedName>
    <alternativeName>
        <fullName>Alpha-mannosidase IIx</fullName>
        <shortName>Man IIx</shortName>
    </alternativeName>
    <alternativeName>
        <fullName>Mannosidase alpha class 2A member 2</fullName>
    </alternativeName>
    <alternativeName>
        <fullName>Mannosyl-oligosaccharide 1,3-1,6-alpha-mannosidase</fullName>
    </alternativeName>
</protein>
<keyword id="KW-0025">Alternative splicing</keyword>
<keyword id="KW-0175">Coiled coil</keyword>
<keyword id="KW-1015">Disulfide bond</keyword>
<keyword id="KW-0325">Glycoprotein</keyword>
<keyword id="KW-0326">Glycosidase</keyword>
<keyword id="KW-0333">Golgi apparatus</keyword>
<keyword id="KW-0378">Hydrolase</keyword>
<keyword id="KW-0472">Membrane</keyword>
<keyword id="KW-0479">Metal-binding</keyword>
<keyword id="KW-1185">Reference proteome</keyword>
<keyword id="KW-0735">Signal-anchor</keyword>
<keyword id="KW-0812">Transmembrane</keyword>
<keyword id="KW-1133">Transmembrane helix</keyword>
<keyword id="KW-0862">Zinc</keyword>
<evidence type="ECO:0000250" key="1"/>
<evidence type="ECO:0000250" key="2">
    <source>
        <dbReference type="UniProtKB" id="P28494"/>
    </source>
</evidence>
<evidence type="ECO:0000255" key="3"/>
<evidence type="ECO:0000269" key="4">
    <source>
    </source>
</evidence>
<evidence type="ECO:0000303" key="5">
    <source>
    </source>
</evidence>
<evidence type="ECO:0000305" key="6"/>
<name>MA2A2_MOUSE</name>
<dbReference type="EC" id="3.2.1.114" evidence="2"/>
<dbReference type="EMBL" id="AK029913">
    <property type="status" value="NOT_ANNOTATED_CDS"/>
    <property type="molecule type" value="mRNA"/>
</dbReference>
<dbReference type="EMBL" id="AK044028">
    <property type="protein sequence ID" value="BAC31745.1"/>
    <property type="molecule type" value="mRNA"/>
</dbReference>
<dbReference type="EMBL" id="AK137205">
    <property type="protein sequence ID" value="BAE23268.1"/>
    <property type="molecule type" value="mRNA"/>
</dbReference>
<dbReference type="EMBL" id="AC136740">
    <property type="status" value="NOT_ANNOTATED_CDS"/>
    <property type="molecule type" value="Genomic_DNA"/>
</dbReference>
<dbReference type="CCDS" id="CCDS57556.1">
    <molecule id="Q8BRK9-1"/>
</dbReference>
<dbReference type="RefSeq" id="NP_766491.2">
    <molecule id="Q8BRK9-1"/>
    <property type="nucleotide sequence ID" value="NM_172903.4"/>
</dbReference>
<dbReference type="RefSeq" id="XP_006540662.1">
    <molecule id="Q8BRK9-1"/>
    <property type="nucleotide sequence ID" value="XM_006540599.4"/>
</dbReference>
<dbReference type="RefSeq" id="XP_036008560.1">
    <molecule id="Q8BRK9-1"/>
    <property type="nucleotide sequence ID" value="XM_036152667.1"/>
</dbReference>
<dbReference type="SMR" id="Q8BRK9"/>
<dbReference type="BioGRID" id="228256">
    <property type="interactions" value="4"/>
</dbReference>
<dbReference type="FunCoup" id="Q8BRK9">
    <property type="interactions" value="1206"/>
</dbReference>
<dbReference type="IntAct" id="Q8BRK9">
    <property type="interactions" value="1"/>
</dbReference>
<dbReference type="MINT" id="Q8BRK9"/>
<dbReference type="STRING" id="10090.ENSMUSP00000095949"/>
<dbReference type="CAZy" id="GH38">
    <property type="family name" value="Glycoside Hydrolase Family 38"/>
</dbReference>
<dbReference type="GlyCosmos" id="Q8BRK9">
    <property type="glycosylation" value="2 sites, No reported glycans"/>
</dbReference>
<dbReference type="GlyGen" id="Q8BRK9">
    <property type="glycosylation" value="3 sites, 1 N-linked glycan (2 sites)"/>
</dbReference>
<dbReference type="iPTMnet" id="Q8BRK9"/>
<dbReference type="PhosphoSitePlus" id="Q8BRK9"/>
<dbReference type="PaxDb" id="10090-ENSMUSP00000095949"/>
<dbReference type="PeptideAtlas" id="Q8BRK9"/>
<dbReference type="ProteomicsDB" id="287285">
    <molecule id="Q8BRK9-1"/>
</dbReference>
<dbReference type="ProteomicsDB" id="287286">
    <molecule id="Q8BRK9-2"/>
</dbReference>
<dbReference type="Pumba" id="Q8BRK9"/>
<dbReference type="Antibodypedia" id="2725">
    <property type="antibodies" value="86 antibodies from 17 providers"/>
</dbReference>
<dbReference type="DNASU" id="140481"/>
<dbReference type="Ensembl" id="ENSMUST00000098346.5">
    <molecule id="Q8BRK9-1"/>
    <property type="protein sequence ID" value="ENSMUSP00000095949.4"/>
    <property type="gene ID" value="ENSMUSG00000038886.11"/>
</dbReference>
<dbReference type="GeneID" id="140481"/>
<dbReference type="KEGG" id="mmu:140481"/>
<dbReference type="UCSC" id="uc009iap.2">
    <molecule id="Q8BRK9-1"/>
    <property type="organism name" value="mouse"/>
</dbReference>
<dbReference type="UCSC" id="uc009iar.2">
    <molecule id="Q8BRK9-2"/>
    <property type="organism name" value="mouse"/>
</dbReference>
<dbReference type="AGR" id="MGI:2150656"/>
<dbReference type="CTD" id="4122"/>
<dbReference type="MGI" id="MGI:2150656">
    <property type="gene designation" value="Man2a2"/>
</dbReference>
<dbReference type="VEuPathDB" id="HostDB:ENSMUSG00000038886"/>
<dbReference type="eggNOG" id="KOG1958">
    <property type="taxonomic scope" value="Eukaryota"/>
</dbReference>
<dbReference type="GeneTree" id="ENSGT01030000234638"/>
<dbReference type="HOGENOM" id="CLU_004690_1_0_1"/>
<dbReference type="InParanoid" id="Q8BRK9"/>
<dbReference type="OMA" id="CPWGQHP"/>
<dbReference type="OrthoDB" id="10261055at2759"/>
<dbReference type="PhylomeDB" id="Q8BRK9"/>
<dbReference type="TreeFam" id="TF313152"/>
<dbReference type="Reactome" id="R-MMU-975578">
    <property type="pathway name" value="Reactions specific to the complex N-glycan synthesis pathway"/>
</dbReference>
<dbReference type="UniPathway" id="UPA00378"/>
<dbReference type="BioGRID-ORCS" id="140481">
    <property type="hits" value="0 hits in 77 CRISPR screens"/>
</dbReference>
<dbReference type="ChiTaRS" id="Man2a2">
    <property type="organism name" value="mouse"/>
</dbReference>
<dbReference type="PRO" id="PR:Q8BRK9"/>
<dbReference type="Proteomes" id="UP000000589">
    <property type="component" value="Chromosome 7"/>
</dbReference>
<dbReference type="RNAct" id="Q8BRK9">
    <property type="molecule type" value="protein"/>
</dbReference>
<dbReference type="Bgee" id="ENSMUSG00000038886">
    <property type="expression patterns" value="Expressed in retinal neural layer and 220 other cell types or tissues"/>
</dbReference>
<dbReference type="ExpressionAtlas" id="Q8BRK9">
    <property type="expression patterns" value="baseline and differential"/>
</dbReference>
<dbReference type="GO" id="GO:0000139">
    <property type="term" value="C:Golgi membrane"/>
    <property type="evidence" value="ECO:0007669"/>
    <property type="project" value="UniProtKB-SubCell"/>
</dbReference>
<dbReference type="GO" id="GO:0030246">
    <property type="term" value="F:carbohydrate binding"/>
    <property type="evidence" value="ECO:0007669"/>
    <property type="project" value="InterPro"/>
</dbReference>
<dbReference type="GO" id="GO:0016799">
    <property type="term" value="F:hydrolase activity, hydrolyzing N-glycosyl compounds"/>
    <property type="evidence" value="ECO:0000314"/>
    <property type="project" value="MGI"/>
</dbReference>
<dbReference type="GO" id="GO:0015923">
    <property type="term" value="F:mannosidase activity"/>
    <property type="evidence" value="ECO:0000314"/>
    <property type="project" value="MGI"/>
</dbReference>
<dbReference type="GO" id="GO:0004572">
    <property type="term" value="F:mannosyl-oligosaccharide 1,3-1,6-alpha-mannosidase activity"/>
    <property type="evidence" value="ECO:0007669"/>
    <property type="project" value="UniProtKB-EC"/>
</dbReference>
<dbReference type="GO" id="GO:0046872">
    <property type="term" value="F:metal ion binding"/>
    <property type="evidence" value="ECO:0007669"/>
    <property type="project" value="UniProtKB-KW"/>
</dbReference>
<dbReference type="GO" id="GO:0006013">
    <property type="term" value="P:mannose metabolic process"/>
    <property type="evidence" value="ECO:0007669"/>
    <property type="project" value="InterPro"/>
</dbReference>
<dbReference type="GO" id="GO:0006486">
    <property type="term" value="P:protein glycosylation"/>
    <property type="evidence" value="ECO:0007669"/>
    <property type="project" value="UniProtKB-UniPathway"/>
</dbReference>
<dbReference type="FunFam" id="1.20.1270.50:FF:000001">
    <property type="entry name" value="Alpha-mannosidase"/>
    <property type="match status" value="1"/>
</dbReference>
<dbReference type="FunFam" id="2.60.40.1180:FF:000009">
    <property type="entry name" value="Alpha-mannosidase"/>
    <property type="match status" value="1"/>
</dbReference>
<dbReference type="FunFam" id="2.70.98.30:FF:000002">
    <property type="entry name" value="Alpha-mannosidase"/>
    <property type="match status" value="1"/>
</dbReference>
<dbReference type="FunFam" id="3.20.110.10:FF:000003">
    <property type="entry name" value="Alpha-mannosidase"/>
    <property type="match status" value="1"/>
</dbReference>
<dbReference type="Gene3D" id="3.20.110.10">
    <property type="entry name" value="Glycoside hydrolase 38, N terminal domain"/>
    <property type="match status" value="1"/>
</dbReference>
<dbReference type="Gene3D" id="1.20.1270.50">
    <property type="entry name" value="Glycoside hydrolase family 38, central domain"/>
    <property type="match status" value="1"/>
</dbReference>
<dbReference type="Gene3D" id="2.60.40.1180">
    <property type="entry name" value="Golgi alpha-mannosidase II"/>
    <property type="match status" value="1"/>
</dbReference>
<dbReference type="Gene3D" id="2.70.98.30">
    <property type="entry name" value="Golgi alpha-mannosidase II, domain 4"/>
    <property type="match status" value="1"/>
</dbReference>
<dbReference type="InterPro" id="IPR011013">
    <property type="entry name" value="Gal_mutarotase_sf_dom"/>
</dbReference>
<dbReference type="InterPro" id="IPR011330">
    <property type="entry name" value="Glyco_hydro/deAcase_b/a-brl"/>
</dbReference>
<dbReference type="InterPro" id="IPR011682">
    <property type="entry name" value="Glyco_hydro_38_C"/>
</dbReference>
<dbReference type="InterPro" id="IPR015341">
    <property type="entry name" value="Glyco_hydro_38_cen"/>
</dbReference>
<dbReference type="InterPro" id="IPR037094">
    <property type="entry name" value="Glyco_hydro_38_cen_sf"/>
</dbReference>
<dbReference type="InterPro" id="IPR000602">
    <property type="entry name" value="Glyco_hydro_38_N"/>
</dbReference>
<dbReference type="InterPro" id="IPR027291">
    <property type="entry name" value="Glyco_hydro_38_N_sf"/>
</dbReference>
<dbReference type="InterPro" id="IPR028995">
    <property type="entry name" value="Glyco_hydro_57/38_cen_sf"/>
</dbReference>
<dbReference type="InterPro" id="IPR013780">
    <property type="entry name" value="Glyco_hydro_b"/>
</dbReference>
<dbReference type="InterPro" id="IPR050843">
    <property type="entry name" value="Glycosyl_Hydrlase_38"/>
</dbReference>
<dbReference type="PANTHER" id="PTHR11607">
    <property type="entry name" value="ALPHA-MANNOSIDASE"/>
    <property type="match status" value="1"/>
</dbReference>
<dbReference type="PANTHER" id="PTHR11607:SF57">
    <property type="entry name" value="ALPHA-MANNOSIDASE 2X"/>
    <property type="match status" value="1"/>
</dbReference>
<dbReference type="Pfam" id="PF09261">
    <property type="entry name" value="Alpha-mann_mid"/>
    <property type="match status" value="1"/>
</dbReference>
<dbReference type="Pfam" id="PF07748">
    <property type="entry name" value="Glyco_hydro_38C"/>
    <property type="match status" value="1"/>
</dbReference>
<dbReference type="Pfam" id="PF01074">
    <property type="entry name" value="Glyco_hydro_38N"/>
    <property type="match status" value="1"/>
</dbReference>
<dbReference type="SMART" id="SM00872">
    <property type="entry name" value="Alpha-mann_mid"/>
    <property type="match status" value="1"/>
</dbReference>
<dbReference type="SUPFAM" id="SSF88688">
    <property type="entry name" value="Families 57/38 glycoside transferase middle domain"/>
    <property type="match status" value="1"/>
</dbReference>
<dbReference type="SUPFAM" id="SSF74650">
    <property type="entry name" value="Galactose mutarotase-like"/>
    <property type="match status" value="1"/>
</dbReference>
<dbReference type="SUPFAM" id="SSF88713">
    <property type="entry name" value="Glycoside hydrolase/deacetylase"/>
    <property type="match status" value="1"/>
</dbReference>
<comment type="function">
    <text evidence="1">Catalyzes the first committed step in the biosynthesis of complex N-glycans. It controls conversion of high mannose to complex N-glycans; the final hydrolytic step in the N-glycan maturation pathway (By similarity).</text>
</comment>
<comment type="catalytic activity">
    <reaction evidence="2">
        <text>N(4)-{beta-D-GlcNAc-(1-&gt;2)-alpha-D-Man-(1-&gt;3)-[alpha-D-Man-(1-&gt;3)-[alpha-D-Man-(1-&gt;6)]-alpha-D-Man-(1-&gt;6)]-beta-D-Man-(1-&gt;4)-beta-D-GlcNAc-(1-&gt;4)-beta-D-GlcNAc}-L-asparaginyl-[protein] + 2 H2O = 2 alpha-D-mannopyranose + an N(4)-{beta-D-GlcNAc-(1-&gt;2)-alpha-D-Man-(1-&gt;3)-[alpha-D-Man-(1-&gt;6)]-beta-D-Man-(1-&gt;4)-beta-D-GlcNAc-(1-&gt;4)-beta-D-GlcNAc}-L-asparaginyl-[protein]</text>
        <dbReference type="Rhea" id="RHEA:56052"/>
        <dbReference type="Rhea" id="RHEA-COMP:14368"/>
        <dbReference type="Rhea" id="RHEA-COMP:14369"/>
        <dbReference type="ChEBI" id="CHEBI:15377"/>
        <dbReference type="ChEBI" id="CHEBI:28729"/>
        <dbReference type="ChEBI" id="CHEBI:60615"/>
        <dbReference type="ChEBI" id="CHEBI:60625"/>
        <dbReference type="EC" id="3.2.1.114"/>
    </reaction>
</comment>
<comment type="cofactor">
    <cofactor evidence="1">
        <name>Zn(2+)</name>
        <dbReference type="ChEBI" id="CHEBI:29105"/>
    </cofactor>
    <text evidence="1">Binds 1 zinc ion per subunit.</text>
</comment>
<comment type="pathway">
    <text>Protein modification; protein glycosylation.</text>
</comment>
<comment type="subunit">
    <text evidence="1 4">Homodimer; disulfide-linked (By similarity). Interacts with MGAT4D.</text>
</comment>
<comment type="subcellular location">
    <subcellularLocation>
        <location evidence="1">Golgi apparatus membrane</location>
        <topology evidence="1">Single-pass type II membrane protein</topology>
    </subcellularLocation>
</comment>
<comment type="alternative products">
    <event type="alternative splicing"/>
    <isoform>
        <id>Q8BRK9-1</id>
        <name>1</name>
        <sequence type="displayed"/>
    </isoform>
    <isoform>
        <id>Q8BRK9-2</id>
        <name>2</name>
        <sequence type="described" ref="VSP_041735 VSP_041736"/>
    </isoform>
</comment>
<comment type="similarity">
    <text evidence="6">Belongs to the glycosyl hydrolase 38 family.</text>
</comment>
<gene>
    <name type="primary">Man2a2</name>
    <name type="synonym">Mana2x</name>
</gene>
<proteinExistence type="evidence at protein level"/>
<accession>Q8BRK9</accession>
<accession>Q3UVK1</accession>
<feature type="chain" id="PRO_0000412634" description="Alpha-mannosidase 2x">
    <location>
        <begin position="1"/>
        <end position="1152"/>
    </location>
</feature>
<feature type="topological domain" description="Cytoplasmic" evidence="3">
    <location>
        <begin position="1"/>
        <end position="5"/>
    </location>
</feature>
<feature type="transmembrane region" description="Helical; Signal-anchor for type II membrane protein" evidence="3">
    <location>
        <begin position="6"/>
        <end position="26"/>
    </location>
</feature>
<feature type="topological domain" description="Lumenal" evidence="3">
    <location>
        <begin position="27"/>
        <end position="796"/>
    </location>
</feature>
<feature type="coiled-coil region" evidence="3">
    <location>
        <begin position="43"/>
        <end position="74"/>
    </location>
</feature>
<feature type="active site" description="Nucleophile" evidence="1">
    <location>
        <position position="289"/>
    </location>
</feature>
<feature type="binding site" evidence="1">
    <location>
        <position position="175"/>
    </location>
    <ligand>
        <name>Zn(2+)</name>
        <dbReference type="ChEBI" id="CHEBI:29105"/>
    </ligand>
</feature>
<feature type="binding site" evidence="1">
    <location>
        <position position="177"/>
    </location>
    <ligand>
        <name>Zn(2+)</name>
        <dbReference type="ChEBI" id="CHEBI:29105"/>
    </ligand>
</feature>
<feature type="binding site" evidence="1">
    <location>
        <position position="289"/>
    </location>
    <ligand>
        <name>Zn(2+)</name>
        <dbReference type="ChEBI" id="CHEBI:29105"/>
    </ligand>
</feature>
<feature type="binding site" evidence="1">
    <location>
        <position position="569"/>
    </location>
    <ligand>
        <name>Zn(2+)</name>
        <dbReference type="ChEBI" id="CHEBI:29105"/>
    </ligand>
</feature>
<feature type="glycosylation site" description="N-linked (GlcNAc...) asparagine" evidence="3">
    <location>
        <position position="225"/>
    </location>
</feature>
<feature type="glycosylation site" description="N-linked (GlcNAc...) asparagine" evidence="3">
    <location>
        <position position="305"/>
    </location>
</feature>
<feature type="splice variant" id="VSP_041735" description="In isoform 2." evidence="5">
    <original>SIRRVDEEQEQQMELEFLVYGTRTSKDKSGAYLFLPDSEAKPYVP</original>
    <variation>VKGQARGGGEGPEEGMGVRGLVDSCSCSHVPSCLSPDSQRFGCEH</variation>
    <location>
        <begin position="783"/>
        <end position="827"/>
    </location>
</feature>
<feature type="splice variant" id="VSP_041736" description="In isoform 2." evidence="5">
    <location>
        <begin position="828"/>
        <end position="1152"/>
    </location>
</feature>
<feature type="sequence conflict" description="In Ref. 1; AK029913." evidence="6" ref="1">
    <original>S</original>
    <variation>T</variation>
    <location>
        <position position="97"/>
    </location>
</feature>
<feature type="sequence conflict" description="In Ref. 1; BAE23268." evidence="6" ref="1">
    <original>G</original>
    <variation>S</variation>
    <location>
        <position position="1111"/>
    </location>
</feature>
<sequence>MKLKKQVTVCGAAIFCVAVFSLYLMLDRVQHDPARHQNGGNFPRSQISVLQNRIEQLEQLLEENHDIISRIKDSVLELTANAEGPPALLPYHTANGSWAVLPEPRPSFFSVSPQDCQFALGGRGQKPELQMLTVSEDLPFDNVEGGVWRQGFDISYSPNDWDTEDLQVFVVPHSHNDPGWIKTFDKYYTEQTQHILNSMVSKLQEDPRRRFLWAEVSFFAKWWDNISAQKRAAVRRLVGNGQLEIATGGWVMPDEANSHYFALVDQLIEGHQWLERNLGATPRSGWAVDPFGHSSTMPYLLRRANLTSMLIQRVHYAIKKHFAATHSLEFMWRQMWDSDSSTDIFCHMMPFYSYDVPHTCGPDPKICCQFDFKRLPGGRINCPWKVPPRAITEANVADRAALLLDQYRKKSRLFRSNVLLVPLGDDFRYDKPQEWDAQFFNYQRLFDFLNSKPEFHVQAQFGTLSEYFDALYKRTGVEPGARPPGFPVLSGDFFSYADREDHYWTGYYTSRPFYKSLDRVLEAHLRGAEILYSLALAHARRSGLAGQYPLSDFALLTEARRTLGLFQHHDAITGTAKEAVVVDYGVRLLRSLVSLKQVIINAAHYLVLGDQETYSFDPGTPFLQMDDSRVSHDALPERTVIRLDSSPRFVVVFNPLEQERLSVVSLLVNSPRVRVLSEEGQPLSVQISVHWSSATDMVPDVYQVSVPVRLPGLGLGVLQLQPDLDGPYTLQSSVRVYLNGVKLSVSRQSAFPVRVVDSGASDFAISNRYMQVWFSGLTGLLKSIRRVDEEQEQQMELEFLVYGTRTSKDKSGAYLFLPDSEAKPYVPKKPPVLRVTEGPFFSEVAVYYEHFHQVIRLYNLPGVEGLSLDMSFQVDIRDYVNKELALRIHTDIDSQGTFFTDLNGFQIQPRQYLKKLPLQANFYPMPVMAYIQDSQRRLTLHTAQALGVSSLGNGQLEVILDRRLMQDDNRGLGQGLKDNKITCNRFRLLLERRTTMSPEVHQEQERSTSYPSLLSHLTSMYLSTPPLVLPVAKRQGTSPALRSFHPLASPLPCDFHLLNLRMLPAEDTLPATDSALILHRKGFDCGLEAKNLGFNCTTSQGKLALGSLFHGLDVTFLQPTSLTLLYPLASPSNSTDISLEPMEISTFRLRLG</sequence>
<reference key="1">
    <citation type="journal article" date="2005" name="Science">
        <title>The transcriptional landscape of the mammalian genome.</title>
        <authorList>
            <person name="Carninci P."/>
            <person name="Kasukawa T."/>
            <person name="Katayama S."/>
            <person name="Gough J."/>
            <person name="Frith M.C."/>
            <person name="Maeda N."/>
            <person name="Oyama R."/>
            <person name="Ravasi T."/>
            <person name="Lenhard B."/>
            <person name="Wells C."/>
            <person name="Kodzius R."/>
            <person name="Shimokawa K."/>
            <person name="Bajic V.B."/>
            <person name="Brenner S.E."/>
            <person name="Batalov S."/>
            <person name="Forrest A.R."/>
            <person name="Zavolan M."/>
            <person name="Davis M.J."/>
            <person name="Wilming L.G."/>
            <person name="Aidinis V."/>
            <person name="Allen J.E."/>
            <person name="Ambesi-Impiombato A."/>
            <person name="Apweiler R."/>
            <person name="Aturaliya R.N."/>
            <person name="Bailey T.L."/>
            <person name="Bansal M."/>
            <person name="Baxter L."/>
            <person name="Beisel K.W."/>
            <person name="Bersano T."/>
            <person name="Bono H."/>
            <person name="Chalk A.M."/>
            <person name="Chiu K.P."/>
            <person name="Choudhary V."/>
            <person name="Christoffels A."/>
            <person name="Clutterbuck D.R."/>
            <person name="Crowe M.L."/>
            <person name="Dalla E."/>
            <person name="Dalrymple B.P."/>
            <person name="de Bono B."/>
            <person name="Della Gatta G."/>
            <person name="di Bernardo D."/>
            <person name="Down T."/>
            <person name="Engstrom P."/>
            <person name="Fagiolini M."/>
            <person name="Faulkner G."/>
            <person name="Fletcher C.F."/>
            <person name="Fukushima T."/>
            <person name="Furuno M."/>
            <person name="Futaki S."/>
            <person name="Gariboldi M."/>
            <person name="Georgii-Hemming P."/>
            <person name="Gingeras T.R."/>
            <person name="Gojobori T."/>
            <person name="Green R.E."/>
            <person name="Gustincich S."/>
            <person name="Harbers M."/>
            <person name="Hayashi Y."/>
            <person name="Hensch T.K."/>
            <person name="Hirokawa N."/>
            <person name="Hill D."/>
            <person name="Huminiecki L."/>
            <person name="Iacono M."/>
            <person name="Ikeo K."/>
            <person name="Iwama A."/>
            <person name="Ishikawa T."/>
            <person name="Jakt M."/>
            <person name="Kanapin A."/>
            <person name="Katoh M."/>
            <person name="Kawasawa Y."/>
            <person name="Kelso J."/>
            <person name="Kitamura H."/>
            <person name="Kitano H."/>
            <person name="Kollias G."/>
            <person name="Krishnan S.P."/>
            <person name="Kruger A."/>
            <person name="Kummerfeld S.K."/>
            <person name="Kurochkin I.V."/>
            <person name="Lareau L.F."/>
            <person name="Lazarevic D."/>
            <person name="Lipovich L."/>
            <person name="Liu J."/>
            <person name="Liuni S."/>
            <person name="McWilliam S."/>
            <person name="Madan Babu M."/>
            <person name="Madera M."/>
            <person name="Marchionni L."/>
            <person name="Matsuda H."/>
            <person name="Matsuzawa S."/>
            <person name="Miki H."/>
            <person name="Mignone F."/>
            <person name="Miyake S."/>
            <person name="Morris K."/>
            <person name="Mottagui-Tabar S."/>
            <person name="Mulder N."/>
            <person name="Nakano N."/>
            <person name="Nakauchi H."/>
            <person name="Ng P."/>
            <person name="Nilsson R."/>
            <person name="Nishiguchi S."/>
            <person name="Nishikawa S."/>
            <person name="Nori F."/>
            <person name="Ohara O."/>
            <person name="Okazaki Y."/>
            <person name="Orlando V."/>
            <person name="Pang K.C."/>
            <person name="Pavan W.J."/>
            <person name="Pavesi G."/>
            <person name="Pesole G."/>
            <person name="Petrovsky N."/>
            <person name="Piazza S."/>
            <person name="Reed J."/>
            <person name="Reid J.F."/>
            <person name="Ring B.Z."/>
            <person name="Ringwald M."/>
            <person name="Rost B."/>
            <person name="Ruan Y."/>
            <person name="Salzberg S.L."/>
            <person name="Sandelin A."/>
            <person name="Schneider C."/>
            <person name="Schoenbach C."/>
            <person name="Sekiguchi K."/>
            <person name="Semple C.A."/>
            <person name="Seno S."/>
            <person name="Sessa L."/>
            <person name="Sheng Y."/>
            <person name="Shibata Y."/>
            <person name="Shimada H."/>
            <person name="Shimada K."/>
            <person name="Silva D."/>
            <person name="Sinclair B."/>
            <person name="Sperling S."/>
            <person name="Stupka E."/>
            <person name="Sugiura K."/>
            <person name="Sultana R."/>
            <person name="Takenaka Y."/>
            <person name="Taki K."/>
            <person name="Tammoja K."/>
            <person name="Tan S.L."/>
            <person name="Tang S."/>
            <person name="Taylor M.S."/>
            <person name="Tegner J."/>
            <person name="Teichmann S.A."/>
            <person name="Ueda H.R."/>
            <person name="van Nimwegen E."/>
            <person name="Verardo R."/>
            <person name="Wei C.L."/>
            <person name="Yagi K."/>
            <person name="Yamanishi H."/>
            <person name="Zabarovsky E."/>
            <person name="Zhu S."/>
            <person name="Zimmer A."/>
            <person name="Hide W."/>
            <person name="Bult C."/>
            <person name="Grimmond S.M."/>
            <person name="Teasdale R.D."/>
            <person name="Liu E.T."/>
            <person name="Brusic V."/>
            <person name="Quackenbush J."/>
            <person name="Wahlestedt C."/>
            <person name="Mattick J.S."/>
            <person name="Hume D.A."/>
            <person name="Kai C."/>
            <person name="Sasaki D."/>
            <person name="Tomaru Y."/>
            <person name="Fukuda S."/>
            <person name="Kanamori-Katayama M."/>
            <person name="Suzuki M."/>
            <person name="Aoki J."/>
            <person name="Arakawa T."/>
            <person name="Iida J."/>
            <person name="Imamura K."/>
            <person name="Itoh M."/>
            <person name="Kato T."/>
            <person name="Kawaji H."/>
            <person name="Kawagashira N."/>
            <person name="Kawashima T."/>
            <person name="Kojima M."/>
            <person name="Kondo S."/>
            <person name="Konno H."/>
            <person name="Nakano K."/>
            <person name="Ninomiya N."/>
            <person name="Nishio T."/>
            <person name="Okada M."/>
            <person name="Plessy C."/>
            <person name="Shibata K."/>
            <person name="Shiraki T."/>
            <person name="Suzuki S."/>
            <person name="Tagami M."/>
            <person name="Waki K."/>
            <person name="Watahiki A."/>
            <person name="Okamura-Oho Y."/>
            <person name="Suzuki H."/>
            <person name="Kawai J."/>
            <person name="Hayashizaki Y."/>
        </authorList>
    </citation>
    <scope>NUCLEOTIDE SEQUENCE [LARGE SCALE MRNA] (ISOFORMS 1 AND 2)</scope>
    <source>
        <strain>C57BL/6J</strain>
        <tissue>Brain cortex</tissue>
        <tissue>Testis</tissue>
        <tissue>Urinary bladder</tissue>
    </source>
</reference>
<reference key="2">
    <citation type="journal article" date="2009" name="PLoS Biol.">
        <title>Lineage-specific biology revealed by a finished genome assembly of the mouse.</title>
        <authorList>
            <person name="Church D.M."/>
            <person name="Goodstadt L."/>
            <person name="Hillier L.W."/>
            <person name="Zody M.C."/>
            <person name="Goldstein S."/>
            <person name="She X."/>
            <person name="Bult C.J."/>
            <person name="Agarwala R."/>
            <person name="Cherry J.L."/>
            <person name="DiCuccio M."/>
            <person name="Hlavina W."/>
            <person name="Kapustin Y."/>
            <person name="Meric P."/>
            <person name="Maglott D."/>
            <person name="Birtle Z."/>
            <person name="Marques A.C."/>
            <person name="Graves T."/>
            <person name="Zhou S."/>
            <person name="Teague B."/>
            <person name="Potamousis K."/>
            <person name="Churas C."/>
            <person name="Place M."/>
            <person name="Herschleb J."/>
            <person name="Runnheim R."/>
            <person name="Forrest D."/>
            <person name="Amos-Landgraf J."/>
            <person name="Schwartz D.C."/>
            <person name="Cheng Z."/>
            <person name="Lindblad-Toh K."/>
            <person name="Eichler E.E."/>
            <person name="Ponting C.P."/>
        </authorList>
    </citation>
    <scope>NUCLEOTIDE SEQUENCE [LARGE SCALE GENOMIC DNA]</scope>
    <source>
        <strain>C57BL/6J</strain>
    </source>
</reference>
<reference key="3">
    <citation type="journal article" date="2010" name="Cell">
        <title>A tissue-specific atlas of mouse protein phosphorylation and expression.</title>
        <authorList>
            <person name="Huttlin E.L."/>
            <person name="Jedrychowski M.P."/>
            <person name="Elias J.E."/>
            <person name="Goswami T."/>
            <person name="Rad R."/>
            <person name="Beausoleil S.A."/>
            <person name="Villen J."/>
            <person name="Haas W."/>
            <person name="Sowa M.E."/>
            <person name="Gygi S.P."/>
        </authorList>
    </citation>
    <scope>IDENTIFICATION BY MASS SPECTROMETRY [LARGE SCALE ANALYSIS]</scope>
    <source>
        <tissue>Brain</tissue>
        <tissue>Brown adipose tissue</tissue>
        <tissue>Lung</tissue>
        <tissue>Spleen</tissue>
        <tissue>Testis</tissue>
    </source>
</reference>
<reference key="4">
    <citation type="journal article" date="2010" name="J. Cell Biol.">
        <title>A testis-specific regulator of complex and hybrid N-glycan synthesis.</title>
        <authorList>
            <person name="Huang H.H."/>
            <person name="Stanley P."/>
        </authorList>
    </citation>
    <scope>INTERACTION WITH MGAT4D</scope>
</reference>